<accession>Q63TW1</accession>
<gene>
    <name evidence="1" type="primary">ssuB</name>
    <name type="ordered locus">BPSL1856</name>
</gene>
<comment type="function">
    <text evidence="1">Part of the ABC transporter complex SsuABC involved in aliphatic sulfonates import. Responsible for energy coupling to the transport system.</text>
</comment>
<comment type="catalytic activity">
    <reaction evidence="1">
        <text>ATP + H2O + aliphatic sulfonate-[sulfonate-binding protein]Side 1 = ADP + phosphate + aliphatic sulfonateSide 2 + [sulfonate-binding protein]Side 1.</text>
        <dbReference type="EC" id="7.6.2.14"/>
    </reaction>
</comment>
<comment type="subunit">
    <text evidence="1">The complex is composed of two ATP-binding proteins (SsuB), two transmembrane proteins (SsuC) and a solute-binding protein (SsuA).</text>
</comment>
<comment type="subcellular location">
    <subcellularLocation>
        <location evidence="1">Cell inner membrane</location>
        <topology evidence="1">Peripheral membrane protein</topology>
    </subcellularLocation>
</comment>
<comment type="similarity">
    <text evidence="1">Belongs to the ABC transporter superfamily. Aliphatic sulfonates importer (TC 3.A.1.17.2) family.</text>
</comment>
<reference key="1">
    <citation type="journal article" date="2004" name="Proc. Natl. Acad. Sci. U.S.A.">
        <title>Genomic plasticity of the causative agent of melioidosis, Burkholderia pseudomallei.</title>
        <authorList>
            <person name="Holden M.T.G."/>
            <person name="Titball R.W."/>
            <person name="Peacock S.J."/>
            <person name="Cerdeno-Tarraga A.-M."/>
            <person name="Atkins T."/>
            <person name="Crossman L.C."/>
            <person name="Pitt T."/>
            <person name="Churcher C."/>
            <person name="Mungall K.L."/>
            <person name="Bentley S.D."/>
            <person name="Sebaihia M."/>
            <person name="Thomson N.R."/>
            <person name="Bason N."/>
            <person name="Beacham I.R."/>
            <person name="Brooks K."/>
            <person name="Brown K.A."/>
            <person name="Brown N.F."/>
            <person name="Challis G.L."/>
            <person name="Cherevach I."/>
            <person name="Chillingworth T."/>
            <person name="Cronin A."/>
            <person name="Crossett B."/>
            <person name="Davis P."/>
            <person name="DeShazer D."/>
            <person name="Feltwell T."/>
            <person name="Fraser A."/>
            <person name="Hance Z."/>
            <person name="Hauser H."/>
            <person name="Holroyd S."/>
            <person name="Jagels K."/>
            <person name="Keith K.E."/>
            <person name="Maddison M."/>
            <person name="Moule S."/>
            <person name="Price C."/>
            <person name="Quail M.A."/>
            <person name="Rabbinowitsch E."/>
            <person name="Rutherford K."/>
            <person name="Sanders M."/>
            <person name="Simmonds M."/>
            <person name="Songsivilai S."/>
            <person name="Stevens K."/>
            <person name="Tumapa S."/>
            <person name="Vesaratchavest M."/>
            <person name="Whitehead S."/>
            <person name="Yeats C."/>
            <person name="Barrell B.G."/>
            <person name="Oyston P.C.F."/>
            <person name="Parkhill J."/>
        </authorList>
    </citation>
    <scope>NUCLEOTIDE SEQUENCE [LARGE SCALE GENOMIC DNA]</scope>
    <source>
        <strain>K96243</strain>
    </source>
</reference>
<protein>
    <recommendedName>
        <fullName evidence="1">Aliphatic sulfonates import ATP-binding protein SsuB</fullName>
        <ecNumber evidence="1">7.6.2.14</ecNumber>
    </recommendedName>
</protein>
<sequence>MTGTTLAATYGPISGADLEAELAQPRIADGDAQDAAVYERDGGAHAPPDGDRADVRRAAGAGDASVRLTRVSKRYGERAVLADVDLSIGRGSFVSIVGRSGCGKSTLLRLVAELETPSAGTLVKRGDGGGALDTRIMYQEARLLPWKTVLQNVMLGLGRRAKDDARAVLDEVGLLARANDWPAQLSGGQRQRVALARALVHRPQLLLLDEPLGALDALTRIEMHALIERLWREHRFTALLVTHDVQEAVALADRVLLIEAGRIAFDQRVPLDRPRARASAAFAALEDRVLQRVLTGSDAAPAAPNAAGPEGASRGRAAPASGLRWAV</sequence>
<organism>
    <name type="scientific">Burkholderia pseudomallei (strain K96243)</name>
    <dbReference type="NCBI Taxonomy" id="272560"/>
    <lineage>
        <taxon>Bacteria</taxon>
        <taxon>Pseudomonadati</taxon>
        <taxon>Pseudomonadota</taxon>
        <taxon>Betaproteobacteria</taxon>
        <taxon>Burkholderiales</taxon>
        <taxon>Burkholderiaceae</taxon>
        <taxon>Burkholderia</taxon>
        <taxon>pseudomallei group</taxon>
    </lineage>
</organism>
<feature type="chain" id="PRO_0000279901" description="Aliphatic sulfonates import ATP-binding protein SsuB">
    <location>
        <begin position="1"/>
        <end position="327"/>
    </location>
</feature>
<feature type="domain" description="ABC transporter" evidence="1">
    <location>
        <begin position="66"/>
        <end position="285"/>
    </location>
</feature>
<feature type="region of interest" description="Disordered" evidence="2">
    <location>
        <begin position="21"/>
        <end position="54"/>
    </location>
</feature>
<feature type="region of interest" description="Disordered" evidence="2">
    <location>
        <begin position="300"/>
        <end position="327"/>
    </location>
</feature>
<feature type="compositionally biased region" description="Basic and acidic residues" evidence="2">
    <location>
        <begin position="37"/>
        <end position="54"/>
    </location>
</feature>
<feature type="binding site" evidence="1">
    <location>
        <begin position="98"/>
        <end position="105"/>
    </location>
    <ligand>
        <name>ATP</name>
        <dbReference type="ChEBI" id="CHEBI:30616"/>
    </ligand>
</feature>
<proteinExistence type="inferred from homology"/>
<keyword id="KW-0067">ATP-binding</keyword>
<keyword id="KW-0997">Cell inner membrane</keyword>
<keyword id="KW-1003">Cell membrane</keyword>
<keyword id="KW-0472">Membrane</keyword>
<keyword id="KW-0547">Nucleotide-binding</keyword>
<keyword id="KW-1185">Reference proteome</keyword>
<keyword id="KW-1278">Translocase</keyword>
<keyword id="KW-0813">Transport</keyword>
<evidence type="ECO:0000255" key="1">
    <source>
        <dbReference type="HAMAP-Rule" id="MF_01724"/>
    </source>
</evidence>
<evidence type="ECO:0000256" key="2">
    <source>
        <dbReference type="SAM" id="MobiDB-lite"/>
    </source>
</evidence>
<dbReference type="EC" id="7.6.2.14" evidence="1"/>
<dbReference type="EMBL" id="BX571965">
    <property type="protein sequence ID" value="CAH35855.1"/>
    <property type="molecule type" value="Genomic_DNA"/>
</dbReference>
<dbReference type="RefSeq" id="WP_004550532.1">
    <property type="nucleotide sequence ID" value="NZ_CP009538.1"/>
</dbReference>
<dbReference type="RefSeq" id="YP_108455.1">
    <property type="nucleotide sequence ID" value="NC_006350.1"/>
</dbReference>
<dbReference type="SMR" id="Q63TW1"/>
<dbReference type="STRING" id="272560.BPSL1856"/>
<dbReference type="KEGG" id="bps:BPSL1856"/>
<dbReference type="PATRIC" id="fig|272560.51.peg.3988"/>
<dbReference type="eggNOG" id="COG1116">
    <property type="taxonomic scope" value="Bacteria"/>
</dbReference>
<dbReference type="Proteomes" id="UP000000605">
    <property type="component" value="Chromosome 1"/>
</dbReference>
<dbReference type="GO" id="GO:0005886">
    <property type="term" value="C:plasma membrane"/>
    <property type="evidence" value="ECO:0007669"/>
    <property type="project" value="UniProtKB-SubCell"/>
</dbReference>
<dbReference type="GO" id="GO:0005524">
    <property type="term" value="F:ATP binding"/>
    <property type="evidence" value="ECO:0007669"/>
    <property type="project" value="UniProtKB-KW"/>
</dbReference>
<dbReference type="GO" id="GO:0016887">
    <property type="term" value="F:ATP hydrolysis activity"/>
    <property type="evidence" value="ECO:0007669"/>
    <property type="project" value="InterPro"/>
</dbReference>
<dbReference type="Gene3D" id="3.40.50.300">
    <property type="entry name" value="P-loop containing nucleotide triphosphate hydrolases"/>
    <property type="match status" value="1"/>
</dbReference>
<dbReference type="InterPro" id="IPR003593">
    <property type="entry name" value="AAA+_ATPase"/>
</dbReference>
<dbReference type="InterPro" id="IPR003439">
    <property type="entry name" value="ABC_transporter-like_ATP-bd"/>
</dbReference>
<dbReference type="InterPro" id="IPR017871">
    <property type="entry name" value="ABC_transporter-like_CS"/>
</dbReference>
<dbReference type="InterPro" id="IPR050166">
    <property type="entry name" value="ABC_transporter_ATP-bind"/>
</dbReference>
<dbReference type="InterPro" id="IPR027417">
    <property type="entry name" value="P-loop_NTPase"/>
</dbReference>
<dbReference type="PANTHER" id="PTHR42788:SF17">
    <property type="entry name" value="ALIPHATIC SULFONATES IMPORT ATP-BINDING PROTEIN SSUB"/>
    <property type="match status" value="1"/>
</dbReference>
<dbReference type="PANTHER" id="PTHR42788">
    <property type="entry name" value="TAURINE IMPORT ATP-BINDING PROTEIN-RELATED"/>
    <property type="match status" value="1"/>
</dbReference>
<dbReference type="Pfam" id="PF00005">
    <property type="entry name" value="ABC_tran"/>
    <property type="match status" value="1"/>
</dbReference>
<dbReference type="SMART" id="SM00382">
    <property type="entry name" value="AAA"/>
    <property type="match status" value="1"/>
</dbReference>
<dbReference type="SUPFAM" id="SSF52540">
    <property type="entry name" value="P-loop containing nucleoside triphosphate hydrolases"/>
    <property type="match status" value="1"/>
</dbReference>
<dbReference type="PROSITE" id="PS00211">
    <property type="entry name" value="ABC_TRANSPORTER_1"/>
    <property type="match status" value="1"/>
</dbReference>
<dbReference type="PROSITE" id="PS50893">
    <property type="entry name" value="ABC_TRANSPORTER_2"/>
    <property type="match status" value="1"/>
</dbReference>
<dbReference type="PROSITE" id="PS51291">
    <property type="entry name" value="SSUB"/>
    <property type="match status" value="1"/>
</dbReference>
<name>SSUB_BURPS</name>